<feature type="chain" id="PRO_1000021582" description="Nicotinate-nucleotide--dimethylbenzimidazole phosphoribosyltransferase">
    <location>
        <begin position="1"/>
        <end position="354"/>
    </location>
</feature>
<feature type="active site" description="Proton acceptor" evidence="1">
    <location>
        <position position="319"/>
    </location>
</feature>
<sequence>MKEKLETLLAAIQPADQTLRQAIQAHLDDLTKPQGSLGRLEEIAQQYILATGQIHPSLPKKKICCFAGDHGVAAEGVSAFPAEVTPQMVYNMLHGGAAINVLSRHVGAELSVVDVGVNHDFADAPNLVQCKVKRGSANMAVGAAMSETETLQAILAGAELAFQAADAGYGLLGTGEMGIANTTPATALYAVLLNLPVEAITGRGTGIDDARLHHKIAVIERAIAVNAERCATPFGTLAALGGFEIAAITGFILGAAARRIPVVVDGFISSSGALVAMKMVPSVVDYLFFSHLSAEQGHGAVMEALGVRPMLSLDLRLGEGTGAALAMQLVDAALKIYNEMATFSGAQVSEKIEG</sequence>
<evidence type="ECO:0000255" key="1">
    <source>
        <dbReference type="HAMAP-Rule" id="MF_00230"/>
    </source>
</evidence>
<accession>Q3ARQ5</accession>
<protein>
    <recommendedName>
        <fullName evidence="1">Nicotinate-nucleotide--dimethylbenzimidazole phosphoribosyltransferase</fullName>
        <shortName evidence="1">NN:DBI PRT</shortName>
        <ecNumber evidence="1">2.4.2.21</ecNumber>
    </recommendedName>
    <alternativeName>
        <fullName evidence="1">N(1)-alpha-phosphoribosyltransferase</fullName>
    </alternativeName>
</protein>
<dbReference type="EC" id="2.4.2.21" evidence="1"/>
<dbReference type="EMBL" id="CP000108">
    <property type="protein sequence ID" value="ABB28320.1"/>
    <property type="molecule type" value="Genomic_DNA"/>
</dbReference>
<dbReference type="SMR" id="Q3ARQ5"/>
<dbReference type="STRING" id="340177.Cag_1058"/>
<dbReference type="KEGG" id="cch:Cag_1058"/>
<dbReference type="eggNOG" id="COG2038">
    <property type="taxonomic scope" value="Bacteria"/>
</dbReference>
<dbReference type="HOGENOM" id="CLU_002982_0_0_10"/>
<dbReference type="OrthoDB" id="9781491at2"/>
<dbReference type="UniPathway" id="UPA00061">
    <property type="reaction ID" value="UER00516"/>
</dbReference>
<dbReference type="GO" id="GO:0008939">
    <property type="term" value="F:nicotinate-nucleotide-dimethylbenzimidazole phosphoribosyltransferase activity"/>
    <property type="evidence" value="ECO:0007669"/>
    <property type="project" value="UniProtKB-UniRule"/>
</dbReference>
<dbReference type="GO" id="GO:0009236">
    <property type="term" value="P:cobalamin biosynthetic process"/>
    <property type="evidence" value="ECO:0007669"/>
    <property type="project" value="UniProtKB-KW"/>
</dbReference>
<dbReference type="CDD" id="cd02439">
    <property type="entry name" value="DMB-PRT_CobT"/>
    <property type="match status" value="1"/>
</dbReference>
<dbReference type="FunFam" id="3.40.50.10210:FF:000001">
    <property type="entry name" value="Nicotinate-nucleotide--dimethylbenzimidazole phosphoribosyltransferase"/>
    <property type="match status" value="1"/>
</dbReference>
<dbReference type="Gene3D" id="1.10.1610.10">
    <property type="match status" value="1"/>
</dbReference>
<dbReference type="Gene3D" id="3.40.50.10210">
    <property type="match status" value="1"/>
</dbReference>
<dbReference type="HAMAP" id="MF_00230">
    <property type="entry name" value="CobT"/>
    <property type="match status" value="1"/>
</dbReference>
<dbReference type="InterPro" id="IPR003200">
    <property type="entry name" value="Nict_dMeBzImd_PRibTrfase"/>
</dbReference>
<dbReference type="InterPro" id="IPR017846">
    <property type="entry name" value="Nict_dMeBzImd_PRibTrfase_bact"/>
</dbReference>
<dbReference type="InterPro" id="IPR023195">
    <property type="entry name" value="Nict_dMeBzImd_PRibTrfase_N"/>
</dbReference>
<dbReference type="InterPro" id="IPR036087">
    <property type="entry name" value="Nict_dMeBzImd_PRibTrfase_sf"/>
</dbReference>
<dbReference type="NCBIfam" id="TIGR03160">
    <property type="entry name" value="cobT_DBIPRT"/>
    <property type="match status" value="1"/>
</dbReference>
<dbReference type="NCBIfam" id="NF000996">
    <property type="entry name" value="PRK00105.1"/>
    <property type="match status" value="1"/>
</dbReference>
<dbReference type="PANTHER" id="PTHR43463">
    <property type="entry name" value="NICOTINATE-NUCLEOTIDE--DIMETHYLBENZIMIDAZOLE PHOSPHORIBOSYLTRANSFERASE"/>
    <property type="match status" value="1"/>
</dbReference>
<dbReference type="PANTHER" id="PTHR43463:SF1">
    <property type="entry name" value="NICOTINATE-NUCLEOTIDE--DIMETHYLBENZIMIDAZOLE PHOSPHORIBOSYLTRANSFERASE"/>
    <property type="match status" value="1"/>
</dbReference>
<dbReference type="Pfam" id="PF02277">
    <property type="entry name" value="DBI_PRT"/>
    <property type="match status" value="1"/>
</dbReference>
<dbReference type="SUPFAM" id="SSF52733">
    <property type="entry name" value="Nicotinate mononucleotide:5,6-dimethylbenzimidazole phosphoribosyltransferase (CobT)"/>
    <property type="match status" value="1"/>
</dbReference>
<keyword id="KW-0169">Cobalamin biosynthesis</keyword>
<keyword id="KW-0328">Glycosyltransferase</keyword>
<keyword id="KW-0808">Transferase</keyword>
<proteinExistence type="inferred from homology"/>
<comment type="function">
    <text evidence="1">Catalyzes the synthesis of alpha-ribazole-5'-phosphate from nicotinate mononucleotide (NAMN) and 5,6-dimethylbenzimidazole (DMB).</text>
</comment>
<comment type="catalytic activity">
    <reaction evidence="1">
        <text>5,6-dimethylbenzimidazole + nicotinate beta-D-ribonucleotide = alpha-ribazole 5'-phosphate + nicotinate + H(+)</text>
        <dbReference type="Rhea" id="RHEA:11196"/>
        <dbReference type="ChEBI" id="CHEBI:15378"/>
        <dbReference type="ChEBI" id="CHEBI:15890"/>
        <dbReference type="ChEBI" id="CHEBI:32544"/>
        <dbReference type="ChEBI" id="CHEBI:57502"/>
        <dbReference type="ChEBI" id="CHEBI:57918"/>
        <dbReference type="EC" id="2.4.2.21"/>
    </reaction>
</comment>
<comment type="pathway">
    <text evidence="1">Nucleoside biosynthesis; alpha-ribazole biosynthesis; alpha-ribazole from 5,6-dimethylbenzimidazole: step 1/2.</text>
</comment>
<comment type="similarity">
    <text evidence="1">Belongs to the CobT family.</text>
</comment>
<reference key="1">
    <citation type="submission" date="2005-08" db="EMBL/GenBank/DDBJ databases">
        <title>Complete sequence of Chlorobium chlorochromatii CaD3.</title>
        <authorList>
            <consortium name="US DOE Joint Genome Institute"/>
            <person name="Copeland A."/>
            <person name="Lucas S."/>
            <person name="Lapidus A."/>
            <person name="Barry K."/>
            <person name="Detter J.C."/>
            <person name="Glavina T."/>
            <person name="Hammon N."/>
            <person name="Israni S."/>
            <person name="Pitluck S."/>
            <person name="Bryant D."/>
            <person name="Schmutz J."/>
            <person name="Larimer F."/>
            <person name="Land M."/>
            <person name="Kyrpides N."/>
            <person name="Ivanova N."/>
            <person name="Richardson P."/>
        </authorList>
    </citation>
    <scope>NUCLEOTIDE SEQUENCE [LARGE SCALE GENOMIC DNA]</scope>
    <source>
        <strain>CaD3</strain>
    </source>
</reference>
<name>COBT_CHLCH</name>
<organism>
    <name type="scientific">Chlorobium chlorochromatii (strain CaD3)</name>
    <dbReference type="NCBI Taxonomy" id="340177"/>
    <lineage>
        <taxon>Bacteria</taxon>
        <taxon>Pseudomonadati</taxon>
        <taxon>Chlorobiota</taxon>
        <taxon>Chlorobiia</taxon>
        <taxon>Chlorobiales</taxon>
        <taxon>Chlorobiaceae</taxon>
        <taxon>Chlorobium/Pelodictyon group</taxon>
        <taxon>Chlorobium</taxon>
    </lineage>
</organism>
<gene>
    <name evidence="1" type="primary">cobT</name>
    <name type="ordered locus">Cag_1058</name>
</gene>